<name>UCRI_BRADU</name>
<feature type="chain" id="PRO_0000127759" description="Ubiquinol-cytochrome c reductase iron-sulfur subunit">
    <location>
        <begin position="1"/>
        <end position="176"/>
    </location>
</feature>
<feature type="transmembrane region" description="Helical" evidence="1">
    <location>
        <begin position="15"/>
        <end position="36"/>
    </location>
</feature>
<feature type="domain" description="Rieske" evidence="2">
    <location>
        <begin position="87"/>
        <end position="174"/>
    </location>
</feature>
<feature type="binding site" evidence="2">
    <location>
        <position position="119"/>
    </location>
    <ligand>
        <name>[2Fe-2S] cluster</name>
        <dbReference type="ChEBI" id="CHEBI:190135"/>
    </ligand>
</feature>
<feature type="binding site" evidence="2">
    <location>
        <position position="121"/>
    </location>
    <ligand>
        <name>[2Fe-2S] cluster</name>
        <dbReference type="ChEBI" id="CHEBI:190135"/>
    </ligand>
</feature>
<feature type="binding site" evidence="2">
    <location>
        <position position="138"/>
    </location>
    <ligand>
        <name>[2Fe-2S] cluster</name>
        <dbReference type="ChEBI" id="CHEBI:190135"/>
    </ligand>
</feature>
<feature type="binding site" evidence="2">
    <location>
        <position position="141"/>
    </location>
    <ligand>
        <name>[2Fe-2S] cluster</name>
        <dbReference type="ChEBI" id="CHEBI:190135"/>
    </ligand>
</feature>
<feature type="disulfide bond" evidence="2">
    <location>
        <begin position="124"/>
        <end position="140"/>
    </location>
</feature>
<keyword id="KW-0001">2Fe-2S</keyword>
<keyword id="KW-1003">Cell membrane</keyword>
<keyword id="KW-1015">Disulfide bond</keyword>
<keyword id="KW-0249">Electron transport</keyword>
<keyword id="KW-0408">Iron</keyword>
<keyword id="KW-0411">Iron-sulfur</keyword>
<keyword id="KW-0472">Membrane</keyword>
<keyword id="KW-0479">Metal-binding</keyword>
<keyword id="KW-1185">Reference proteome</keyword>
<keyword id="KW-1278">Translocase</keyword>
<keyword id="KW-0812">Transmembrane</keyword>
<keyword id="KW-1133">Transmembrane helix</keyword>
<keyword id="KW-0813">Transport</keyword>
<reference key="1">
    <citation type="journal article" date="1989" name="Cell">
        <title>An unusual gene cluster for the cytochrome bc1 complex in Bradyrhizobium japonicum and its requirement for effective root nodule symbiosis.</title>
        <authorList>
            <person name="Thoeny-Meyer L."/>
            <person name="Stax D."/>
            <person name="Hennecke H."/>
        </authorList>
    </citation>
    <scope>NUCLEOTIDE SEQUENCE [GENOMIC DNA]</scope>
    <source>
        <strain>JCM 10833 / BCRC 13528 / IAM 13628 / NBRC 14792 / USDA 110</strain>
    </source>
</reference>
<reference key="2">
    <citation type="journal article" date="2002" name="DNA Res.">
        <title>Complete genomic sequence of nitrogen-fixing symbiotic bacterium Bradyrhizobium japonicum USDA110.</title>
        <authorList>
            <person name="Kaneko T."/>
            <person name="Nakamura Y."/>
            <person name="Sato S."/>
            <person name="Minamisawa K."/>
            <person name="Uchiumi T."/>
            <person name="Sasamoto S."/>
            <person name="Watanabe A."/>
            <person name="Idesawa K."/>
            <person name="Iriguchi M."/>
            <person name="Kawashima K."/>
            <person name="Kohara M."/>
            <person name="Matsumoto M."/>
            <person name="Shimpo S."/>
            <person name="Tsuruoka H."/>
            <person name="Wada T."/>
            <person name="Yamada M."/>
            <person name="Tabata S."/>
        </authorList>
    </citation>
    <scope>NUCLEOTIDE SEQUENCE [LARGE SCALE GENOMIC DNA]</scope>
    <source>
        <strain>JCM 10833 / BCRC 13528 / IAM 13628 / NBRC 14792 / USDA 110</strain>
    </source>
</reference>
<organism>
    <name type="scientific">Bradyrhizobium diazoefficiens (strain JCM 10833 / BCRC 13528 / IAM 13628 / NBRC 14792 / USDA 110)</name>
    <dbReference type="NCBI Taxonomy" id="224911"/>
    <lineage>
        <taxon>Bacteria</taxon>
        <taxon>Pseudomonadati</taxon>
        <taxon>Pseudomonadota</taxon>
        <taxon>Alphaproteobacteria</taxon>
        <taxon>Hyphomicrobiales</taxon>
        <taxon>Nitrobacteraceae</taxon>
        <taxon>Bradyrhizobium</taxon>
    </lineage>
</organism>
<accession>P51130</accession>
<dbReference type="EC" id="7.1.1.8"/>
<dbReference type="EMBL" id="J03176">
    <property type="protein sequence ID" value="AAA26199.1"/>
    <property type="molecule type" value="Genomic_DNA"/>
</dbReference>
<dbReference type="EMBL" id="BA000040">
    <property type="protein sequence ID" value="BAC47750.1"/>
    <property type="molecule type" value="Genomic_DNA"/>
</dbReference>
<dbReference type="PIR" id="A32382">
    <property type="entry name" value="A32382"/>
</dbReference>
<dbReference type="RefSeq" id="NP_769125.1">
    <property type="nucleotide sequence ID" value="NC_004463.1"/>
</dbReference>
<dbReference type="RefSeq" id="WP_011085272.1">
    <property type="nucleotide sequence ID" value="NZ_CP011360.1"/>
</dbReference>
<dbReference type="SMR" id="P51130"/>
<dbReference type="STRING" id="224911.AAV28_09350"/>
<dbReference type="EnsemblBacteria" id="BAC47750">
    <property type="protein sequence ID" value="BAC47750"/>
    <property type="gene ID" value="BAC47750"/>
</dbReference>
<dbReference type="GeneID" id="46489524"/>
<dbReference type="KEGG" id="bja:blr2485"/>
<dbReference type="PATRIC" id="fig|224911.44.peg.2056"/>
<dbReference type="eggNOG" id="COG0723">
    <property type="taxonomic scope" value="Bacteria"/>
</dbReference>
<dbReference type="HOGENOM" id="CLU_055690_0_2_5"/>
<dbReference type="InParanoid" id="P51130"/>
<dbReference type="OrthoDB" id="9767869at2"/>
<dbReference type="PhylomeDB" id="P51130"/>
<dbReference type="Proteomes" id="UP000002526">
    <property type="component" value="Chromosome"/>
</dbReference>
<dbReference type="GO" id="GO:0005886">
    <property type="term" value="C:plasma membrane"/>
    <property type="evidence" value="ECO:0007669"/>
    <property type="project" value="UniProtKB-SubCell"/>
</dbReference>
<dbReference type="GO" id="GO:0045275">
    <property type="term" value="C:respiratory chain complex III"/>
    <property type="evidence" value="ECO:0000318"/>
    <property type="project" value="GO_Central"/>
</dbReference>
<dbReference type="GO" id="GO:0051537">
    <property type="term" value="F:2 iron, 2 sulfur cluster binding"/>
    <property type="evidence" value="ECO:0007669"/>
    <property type="project" value="UniProtKB-KW"/>
</dbReference>
<dbReference type="GO" id="GO:0046872">
    <property type="term" value="F:metal ion binding"/>
    <property type="evidence" value="ECO:0007669"/>
    <property type="project" value="UniProtKB-KW"/>
</dbReference>
<dbReference type="GO" id="GO:0016491">
    <property type="term" value="F:oxidoreductase activity"/>
    <property type="evidence" value="ECO:0000318"/>
    <property type="project" value="GO_Central"/>
</dbReference>
<dbReference type="GO" id="GO:0008121">
    <property type="term" value="F:ubiquinol-cytochrome-c reductase activity"/>
    <property type="evidence" value="ECO:0007669"/>
    <property type="project" value="UniProtKB-EC"/>
</dbReference>
<dbReference type="CDD" id="cd03470">
    <property type="entry name" value="Rieske_cytochrome_bc1"/>
    <property type="match status" value="1"/>
</dbReference>
<dbReference type="FunFam" id="2.102.10.10:FF:000001">
    <property type="entry name" value="Cytochrome b-c1 complex subunit Rieske, mitochondrial"/>
    <property type="match status" value="1"/>
</dbReference>
<dbReference type="Gene3D" id="2.102.10.10">
    <property type="entry name" value="Rieske [2Fe-2S] iron-sulphur domain"/>
    <property type="match status" value="1"/>
</dbReference>
<dbReference type="Gene3D" id="1.20.5.510">
    <property type="entry name" value="Single helix bin"/>
    <property type="match status" value="1"/>
</dbReference>
<dbReference type="InterPro" id="IPR017941">
    <property type="entry name" value="Rieske_2Fe-2S"/>
</dbReference>
<dbReference type="InterPro" id="IPR036922">
    <property type="entry name" value="Rieske_2Fe-2S_sf"/>
</dbReference>
<dbReference type="InterPro" id="IPR014349">
    <property type="entry name" value="Rieske_Fe-S_prot"/>
</dbReference>
<dbReference type="InterPro" id="IPR005805">
    <property type="entry name" value="Rieske_Fe-S_prot_C"/>
</dbReference>
<dbReference type="InterPro" id="IPR006311">
    <property type="entry name" value="TAT_signal"/>
</dbReference>
<dbReference type="InterPro" id="IPR019546">
    <property type="entry name" value="TAT_signal_bac_arc"/>
</dbReference>
<dbReference type="InterPro" id="IPR019470">
    <property type="entry name" value="Ubiq_cytC_Rdtase_Fe-S_su_TAT"/>
</dbReference>
<dbReference type="InterPro" id="IPR006317">
    <property type="entry name" value="Ubiquinol_cyt_c_Rdtase_Fe-S-su"/>
</dbReference>
<dbReference type="NCBIfam" id="TIGR01416">
    <property type="entry name" value="Rieske_proteo"/>
    <property type="match status" value="1"/>
</dbReference>
<dbReference type="NCBIfam" id="TIGR01409">
    <property type="entry name" value="TAT_signal_seq"/>
    <property type="match status" value="1"/>
</dbReference>
<dbReference type="PANTHER" id="PTHR10134">
    <property type="entry name" value="CYTOCHROME B-C1 COMPLEX SUBUNIT RIESKE, MITOCHONDRIAL"/>
    <property type="match status" value="1"/>
</dbReference>
<dbReference type="Pfam" id="PF00355">
    <property type="entry name" value="Rieske"/>
    <property type="match status" value="1"/>
</dbReference>
<dbReference type="Pfam" id="PF10399">
    <property type="entry name" value="UCR_Fe-S_N"/>
    <property type="match status" value="1"/>
</dbReference>
<dbReference type="PRINTS" id="PR00162">
    <property type="entry name" value="RIESKE"/>
</dbReference>
<dbReference type="SUPFAM" id="SSF50022">
    <property type="entry name" value="ISP domain"/>
    <property type="match status" value="1"/>
</dbReference>
<dbReference type="PROSITE" id="PS51296">
    <property type="entry name" value="RIESKE"/>
    <property type="match status" value="1"/>
</dbReference>
<dbReference type="PROSITE" id="PS51318">
    <property type="entry name" value="TAT"/>
    <property type="match status" value="1"/>
</dbReference>
<comment type="function">
    <text>Component of the ubiquinol-cytochrome c reductase complex (complex III or cytochrome b-c1 complex), which is a respiratory chain that generates an electrochemical potential coupled to ATP synthesis.</text>
</comment>
<comment type="catalytic activity">
    <reaction>
        <text>a quinol + 2 Fe(III)-[cytochrome c](out) = a quinone + 2 Fe(II)-[cytochrome c](out) + 2 H(+)(out)</text>
        <dbReference type="Rhea" id="RHEA:11484"/>
        <dbReference type="Rhea" id="RHEA-COMP:10350"/>
        <dbReference type="Rhea" id="RHEA-COMP:14399"/>
        <dbReference type="ChEBI" id="CHEBI:15378"/>
        <dbReference type="ChEBI" id="CHEBI:24646"/>
        <dbReference type="ChEBI" id="CHEBI:29033"/>
        <dbReference type="ChEBI" id="CHEBI:29034"/>
        <dbReference type="ChEBI" id="CHEBI:132124"/>
        <dbReference type="EC" id="7.1.1.8"/>
    </reaction>
</comment>
<comment type="cofactor">
    <cofactor evidence="2">
        <name>[2Fe-2S] cluster</name>
        <dbReference type="ChEBI" id="CHEBI:190135"/>
    </cofactor>
    <text evidence="2">Binds 1 [2Fe-2S] cluster per subunit.</text>
</comment>
<comment type="subunit">
    <text>The main subunits of complex b-c1 are: cytochrome b, cytochrome c1 and the Rieske protein.</text>
</comment>
<comment type="subcellular location">
    <subcellularLocation>
        <location>Cell membrane</location>
        <topology>Single-pass membrane protein</topology>
    </subcellularLocation>
</comment>
<comment type="developmental stage">
    <text>Required for nitrogen fixation in root nodules on soybeans, but not for aerobic growth. It seems however to be expressed under many growth conditions (aerobic, microaerobic and in nodule bacteroids).</text>
</comment>
<comment type="miscellaneous">
    <text>The Rieske protein is a high potential 2Fe-2S protein.</text>
</comment>
<comment type="similarity">
    <text evidence="3">Belongs to the Rieske iron-sulfur protein family.</text>
</comment>
<protein>
    <recommendedName>
        <fullName>Ubiquinol-cytochrome c reductase iron-sulfur subunit</fullName>
        <ecNumber>7.1.1.8</ecNumber>
    </recommendedName>
    <alternativeName>
        <fullName>Rieske iron-sulfur protein</fullName>
        <shortName>RISP</shortName>
    </alternativeName>
</protein>
<sequence>MTTASSADHPTRRDFLFVATGAAAAVGGAAALWPFISQMNPDASTIAAGAPIEVDLSPIAEGQDIKVFWRGKPIYISHRTKKQIDEARAVNVASLPDPQSDEARVKSGHEQWLVVIGICTHLGCIPIAHEGNYDGFFCPCHGSQYDSSGRIRQGPAPANLPVPPYQFVSDTKIQIG</sequence>
<evidence type="ECO:0000255" key="1"/>
<evidence type="ECO:0000255" key="2">
    <source>
        <dbReference type="PROSITE-ProRule" id="PRU00628"/>
    </source>
</evidence>
<evidence type="ECO:0000305" key="3"/>
<proteinExistence type="evidence at transcript level"/>
<gene>
    <name type="primary">petA</name>
    <name type="synonym">fbcF</name>
    <name type="ordered locus">blr2485</name>
</gene>